<comment type="function">
    <text evidence="1">Part of the MsrPQ system that repairs oxidized periplasmic proteins containing methionine sulfoxide residues (Met-O), using respiratory chain electrons. Thus protects these proteins from oxidative-stress damage caused by reactive species of oxygen and chlorine generated by the host defense mechanisms. MsrPQ is essential for the maintenance of envelope integrity under bleach stress, rescuing a wide series of structurally unrelated periplasmic proteins from methionine oxidation. The catalytic subunit MsrP is non-stereospecific, being able to reduce both (R-) and (S-) diastereoisomers of methionine sulfoxide.</text>
</comment>
<comment type="catalytic activity">
    <reaction evidence="1">
        <text>L-methionyl-[protein] + a quinone + H2O = L-methionyl-(S)-S-oxide-[protein] + a quinol</text>
        <dbReference type="Rhea" id="RHEA:51292"/>
        <dbReference type="Rhea" id="RHEA-COMP:12313"/>
        <dbReference type="Rhea" id="RHEA-COMP:12315"/>
        <dbReference type="ChEBI" id="CHEBI:15377"/>
        <dbReference type="ChEBI" id="CHEBI:16044"/>
        <dbReference type="ChEBI" id="CHEBI:24646"/>
        <dbReference type="ChEBI" id="CHEBI:44120"/>
        <dbReference type="ChEBI" id="CHEBI:132124"/>
    </reaction>
</comment>
<comment type="catalytic activity">
    <reaction evidence="1">
        <text>L-methionyl-[protein] + a quinone + H2O = L-methionyl-(R)-S-oxide-[protein] + a quinol</text>
        <dbReference type="Rhea" id="RHEA:51296"/>
        <dbReference type="Rhea" id="RHEA-COMP:12313"/>
        <dbReference type="Rhea" id="RHEA-COMP:12314"/>
        <dbReference type="ChEBI" id="CHEBI:15377"/>
        <dbReference type="ChEBI" id="CHEBI:16044"/>
        <dbReference type="ChEBI" id="CHEBI:24646"/>
        <dbReference type="ChEBI" id="CHEBI:45764"/>
        <dbReference type="ChEBI" id="CHEBI:132124"/>
    </reaction>
</comment>
<comment type="cofactor">
    <cofactor evidence="1">
        <name>Mo-molybdopterin</name>
        <dbReference type="ChEBI" id="CHEBI:71302"/>
    </cofactor>
    <text evidence="1">Binds 1 Mo-molybdopterin (Mo-MPT) cofactor per subunit.</text>
</comment>
<comment type="subunit">
    <text evidence="1">Heterodimer of a catalytic subunit (MsrP) and a heme-binding subunit (MsrQ).</text>
</comment>
<comment type="subcellular location">
    <subcellularLocation>
        <location evidence="1">Periplasm</location>
    </subcellularLocation>
    <text evidence="1">Is attached to the inner membrane when interacting with the MsrQ subunit.</text>
</comment>
<comment type="PTM">
    <text evidence="1">Predicted to be exported by the Tat system. The position of the signal peptide cleavage has not been experimentally proven.</text>
</comment>
<comment type="similarity">
    <text evidence="1">Belongs to the MsrP family.</text>
</comment>
<name>MSRP_PSESM</name>
<protein>
    <recommendedName>
        <fullName evidence="1">Protein-methionine-sulfoxide reductase catalytic subunit MsrP</fullName>
        <ecNumber evidence="1">1.8.5.-</ecNumber>
    </recommendedName>
</protein>
<sequence>MLIKLPSASGSKESDVTPESIYLSRRTLLASSLAGLAVTALPRWASAADASRYADVEAGKAPGWFADKLPSTQWQAVTVKDEAITPFKDATHYNNFYEFGTDKGDPAKNAGSLKTEPWTVVIDGEVGKPGRYALEDFMKPYQLEERIYRLRCVEAWSMVIPWIGFPISALLKQVEPTSKAKYIRFETLEDAKSMPGQRSDFALIDWPYVEGLRLDEAMNPLAILAVGMYGRELPNQNGAPLRLVVPWKYGFKSVKSIVRISLVSEQPKTTWQSIAANEYGFYANVNPMVDHPRWTQARERRLPSGLFSPNLRETKMFNGYEEEVGSLYAGMNLRKDY</sequence>
<feature type="signal peptide" description="Tat-type signal" evidence="1">
    <location>
        <begin position="1"/>
        <end position="50"/>
    </location>
</feature>
<feature type="chain" id="PRO_0000070693" description="Protein-methionine-sulfoxide reductase catalytic subunit MsrP" evidence="1">
    <location>
        <begin position="51"/>
        <end position="337"/>
    </location>
</feature>
<feature type="binding site" evidence="1">
    <location>
        <position position="94"/>
    </location>
    <ligand>
        <name>Mo-molybdopterin</name>
        <dbReference type="ChEBI" id="CHEBI:71302"/>
    </ligand>
</feature>
<feature type="binding site" evidence="1">
    <location>
        <begin position="97"/>
        <end position="98"/>
    </location>
    <ligand>
        <name>Mo-molybdopterin</name>
        <dbReference type="ChEBI" id="CHEBI:71302"/>
    </ligand>
</feature>
<feature type="binding site" evidence="1">
    <location>
        <position position="152"/>
    </location>
    <ligand>
        <name>Mo-molybdopterin</name>
        <dbReference type="ChEBI" id="CHEBI:71302"/>
    </ligand>
    <ligandPart>
        <name>Mo</name>
        <dbReference type="ChEBI" id="CHEBI:28685"/>
    </ligandPart>
</feature>
<feature type="binding site" evidence="1">
    <location>
        <position position="187"/>
    </location>
    <ligand>
        <name>Mo-molybdopterin</name>
        <dbReference type="ChEBI" id="CHEBI:71302"/>
    </ligand>
</feature>
<feature type="binding site" evidence="1">
    <location>
        <position position="237"/>
    </location>
    <ligand>
        <name>Mo-molybdopterin</name>
        <dbReference type="ChEBI" id="CHEBI:71302"/>
    </ligand>
</feature>
<feature type="binding site" evidence="1">
    <location>
        <position position="242"/>
    </location>
    <ligand>
        <name>Mo-molybdopterin</name>
        <dbReference type="ChEBI" id="CHEBI:71302"/>
    </ligand>
</feature>
<feature type="binding site" evidence="1">
    <location>
        <begin position="253"/>
        <end position="255"/>
    </location>
    <ligand>
        <name>Mo-molybdopterin</name>
        <dbReference type="ChEBI" id="CHEBI:71302"/>
    </ligand>
</feature>
<gene>
    <name evidence="1" type="primary">msrP</name>
    <name type="ordered locus">PSPTO_0985</name>
</gene>
<proteinExistence type="inferred from homology"/>
<keyword id="KW-0479">Metal-binding</keyword>
<keyword id="KW-0500">Molybdenum</keyword>
<keyword id="KW-0560">Oxidoreductase</keyword>
<keyword id="KW-0574">Periplasm</keyword>
<keyword id="KW-1185">Reference proteome</keyword>
<keyword id="KW-0732">Signal</keyword>
<dbReference type="EC" id="1.8.5.-" evidence="1"/>
<dbReference type="EMBL" id="AE016853">
    <property type="protein sequence ID" value="AAO54519.1"/>
    <property type="molecule type" value="Genomic_DNA"/>
</dbReference>
<dbReference type="RefSeq" id="NP_790824.1">
    <property type="nucleotide sequence ID" value="NC_004578.1"/>
</dbReference>
<dbReference type="RefSeq" id="WP_005770490.1">
    <property type="nucleotide sequence ID" value="NC_004578.1"/>
</dbReference>
<dbReference type="SMR" id="Q888N2"/>
<dbReference type="STRING" id="223283.PSPTO_0985"/>
<dbReference type="GeneID" id="1182614"/>
<dbReference type="KEGG" id="pst:PSPTO_0985"/>
<dbReference type="PATRIC" id="fig|223283.9.peg.994"/>
<dbReference type="eggNOG" id="COG2041">
    <property type="taxonomic scope" value="Bacteria"/>
</dbReference>
<dbReference type="HOGENOM" id="CLU_045520_0_0_6"/>
<dbReference type="OrthoDB" id="9795587at2"/>
<dbReference type="PhylomeDB" id="Q888N2"/>
<dbReference type="Proteomes" id="UP000002515">
    <property type="component" value="Chromosome"/>
</dbReference>
<dbReference type="GO" id="GO:0042597">
    <property type="term" value="C:periplasmic space"/>
    <property type="evidence" value="ECO:0007669"/>
    <property type="project" value="UniProtKB-SubCell"/>
</dbReference>
<dbReference type="GO" id="GO:0046872">
    <property type="term" value="F:metal ion binding"/>
    <property type="evidence" value="ECO:0007669"/>
    <property type="project" value="UniProtKB-KW"/>
</dbReference>
<dbReference type="GO" id="GO:0043546">
    <property type="term" value="F:molybdopterin cofactor binding"/>
    <property type="evidence" value="ECO:0007669"/>
    <property type="project" value="UniProtKB-UniRule"/>
</dbReference>
<dbReference type="GO" id="GO:0016672">
    <property type="term" value="F:oxidoreductase activity, acting on a sulfur group of donors, quinone or similar compound as acceptor"/>
    <property type="evidence" value="ECO:0007669"/>
    <property type="project" value="UniProtKB-UniRule"/>
</dbReference>
<dbReference type="GO" id="GO:0030091">
    <property type="term" value="P:protein repair"/>
    <property type="evidence" value="ECO:0007669"/>
    <property type="project" value="UniProtKB-UniRule"/>
</dbReference>
<dbReference type="Gene3D" id="3.90.420.10">
    <property type="entry name" value="Oxidoreductase, molybdopterin-binding domain"/>
    <property type="match status" value="1"/>
</dbReference>
<dbReference type="HAMAP" id="MF_01206">
    <property type="entry name" value="MsrP"/>
    <property type="match status" value="1"/>
</dbReference>
<dbReference type="InterPro" id="IPR022867">
    <property type="entry name" value="MsrP"/>
</dbReference>
<dbReference type="InterPro" id="IPR000572">
    <property type="entry name" value="OxRdtase_Mopterin-bd_dom"/>
</dbReference>
<dbReference type="InterPro" id="IPR036374">
    <property type="entry name" value="OxRdtase_Mopterin-bd_sf"/>
</dbReference>
<dbReference type="InterPro" id="IPR006311">
    <property type="entry name" value="TAT_signal"/>
</dbReference>
<dbReference type="NCBIfam" id="NF003767">
    <property type="entry name" value="PRK05363.1"/>
    <property type="match status" value="1"/>
</dbReference>
<dbReference type="PANTHER" id="PTHR43032">
    <property type="entry name" value="PROTEIN-METHIONINE-SULFOXIDE REDUCTASE"/>
    <property type="match status" value="1"/>
</dbReference>
<dbReference type="PANTHER" id="PTHR43032:SF3">
    <property type="entry name" value="PROTEIN-METHIONINE-SULFOXIDE REDUCTASE CATALYTIC SUBUNIT MSRP"/>
    <property type="match status" value="1"/>
</dbReference>
<dbReference type="Pfam" id="PF00174">
    <property type="entry name" value="Oxidored_molyb"/>
    <property type="match status" value="1"/>
</dbReference>
<dbReference type="SUPFAM" id="SSF56524">
    <property type="entry name" value="Oxidoreductase molybdopterin-binding domain"/>
    <property type="match status" value="1"/>
</dbReference>
<dbReference type="PROSITE" id="PS51318">
    <property type="entry name" value="TAT"/>
    <property type="match status" value="1"/>
</dbReference>
<evidence type="ECO:0000255" key="1">
    <source>
        <dbReference type="HAMAP-Rule" id="MF_01206"/>
    </source>
</evidence>
<accession>Q888N2</accession>
<organism>
    <name type="scientific">Pseudomonas syringae pv. tomato (strain ATCC BAA-871 / DC3000)</name>
    <dbReference type="NCBI Taxonomy" id="223283"/>
    <lineage>
        <taxon>Bacteria</taxon>
        <taxon>Pseudomonadati</taxon>
        <taxon>Pseudomonadota</taxon>
        <taxon>Gammaproteobacteria</taxon>
        <taxon>Pseudomonadales</taxon>
        <taxon>Pseudomonadaceae</taxon>
        <taxon>Pseudomonas</taxon>
    </lineage>
</organism>
<reference key="1">
    <citation type="journal article" date="2003" name="Proc. Natl. Acad. Sci. U.S.A.">
        <title>The complete genome sequence of the Arabidopsis and tomato pathogen Pseudomonas syringae pv. tomato DC3000.</title>
        <authorList>
            <person name="Buell C.R."/>
            <person name="Joardar V."/>
            <person name="Lindeberg M."/>
            <person name="Selengut J."/>
            <person name="Paulsen I.T."/>
            <person name="Gwinn M.L."/>
            <person name="Dodson R.J."/>
            <person name="DeBoy R.T."/>
            <person name="Durkin A.S."/>
            <person name="Kolonay J.F."/>
            <person name="Madupu R."/>
            <person name="Daugherty S.C."/>
            <person name="Brinkac L.M."/>
            <person name="Beanan M.J."/>
            <person name="Haft D.H."/>
            <person name="Nelson W.C."/>
            <person name="Davidsen T.M."/>
            <person name="Zafar N."/>
            <person name="Zhou L."/>
            <person name="Liu J."/>
            <person name="Yuan Q."/>
            <person name="Khouri H.M."/>
            <person name="Fedorova N.B."/>
            <person name="Tran B."/>
            <person name="Russell D."/>
            <person name="Berry K.J."/>
            <person name="Utterback T.R."/>
            <person name="Van Aken S.E."/>
            <person name="Feldblyum T.V."/>
            <person name="D'Ascenzo M."/>
            <person name="Deng W.-L."/>
            <person name="Ramos A.R."/>
            <person name="Alfano J.R."/>
            <person name="Cartinhour S."/>
            <person name="Chatterjee A.K."/>
            <person name="Delaney T.P."/>
            <person name="Lazarowitz S.G."/>
            <person name="Martin G.B."/>
            <person name="Schneider D.J."/>
            <person name="Tang X."/>
            <person name="Bender C.L."/>
            <person name="White O."/>
            <person name="Fraser C.M."/>
            <person name="Collmer A."/>
        </authorList>
    </citation>
    <scope>NUCLEOTIDE SEQUENCE [LARGE SCALE GENOMIC DNA]</scope>
    <source>
        <strain>ATCC BAA-871 / DC3000</strain>
    </source>
</reference>